<gene>
    <name evidence="1" type="primary">pdxJ</name>
    <name type="ordered locus">Rru_A1854</name>
</gene>
<name>PDXJ_RHORT</name>
<feature type="chain" id="PRO_0000231842" description="Pyridoxine 5'-phosphate synthase">
    <location>
        <begin position="1"/>
        <end position="249"/>
    </location>
</feature>
<feature type="active site" description="Proton acceptor" evidence="1">
    <location>
        <position position="46"/>
    </location>
</feature>
<feature type="active site" description="Proton acceptor" evidence="1">
    <location>
        <position position="73"/>
    </location>
</feature>
<feature type="active site" description="Proton donor" evidence="1">
    <location>
        <position position="194"/>
    </location>
</feature>
<feature type="binding site" evidence="1">
    <location>
        <position position="10"/>
    </location>
    <ligand>
        <name>3-amino-2-oxopropyl phosphate</name>
        <dbReference type="ChEBI" id="CHEBI:57279"/>
    </ligand>
</feature>
<feature type="binding site" evidence="1">
    <location>
        <begin position="12"/>
        <end position="13"/>
    </location>
    <ligand>
        <name>1-deoxy-D-xylulose 5-phosphate</name>
        <dbReference type="ChEBI" id="CHEBI:57792"/>
    </ligand>
</feature>
<feature type="binding site" evidence="1">
    <location>
        <position position="21"/>
    </location>
    <ligand>
        <name>3-amino-2-oxopropyl phosphate</name>
        <dbReference type="ChEBI" id="CHEBI:57279"/>
    </ligand>
</feature>
<feature type="binding site" evidence="1">
    <location>
        <position position="48"/>
    </location>
    <ligand>
        <name>1-deoxy-D-xylulose 5-phosphate</name>
        <dbReference type="ChEBI" id="CHEBI:57792"/>
    </ligand>
</feature>
<feature type="binding site" evidence="1">
    <location>
        <position position="53"/>
    </location>
    <ligand>
        <name>1-deoxy-D-xylulose 5-phosphate</name>
        <dbReference type="ChEBI" id="CHEBI:57792"/>
    </ligand>
</feature>
<feature type="binding site" evidence="1">
    <location>
        <position position="103"/>
    </location>
    <ligand>
        <name>1-deoxy-D-xylulose 5-phosphate</name>
        <dbReference type="ChEBI" id="CHEBI:57792"/>
    </ligand>
</feature>
<feature type="binding site" evidence="1">
    <location>
        <position position="195"/>
    </location>
    <ligand>
        <name>3-amino-2-oxopropyl phosphate</name>
        <dbReference type="ChEBI" id="CHEBI:57279"/>
    </ligand>
</feature>
<feature type="binding site" evidence="1">
    <location>
        <begin position="216"/>
        <end position="217"/>
    </location>
    <ligand>
        <name>3-amino-2-oxopropyl phosphate</name>
        <dbReference type="ChEBI" id="CHEBI:57279"/>
    </ligand>
</feature>
<feature type="site" description="Transition state stabilizer" evidence="1">
    <location>
        <position position="154"/>
    </location>
</feature>
<keyword id="KW-0963">Cytoplasm</keyword>
<keyword id="KW-0664">Pyridoxine biosynthesis</keyword>
<keyword id="KW-1185">Reference proteome</keyword>
<keyword id="KW-0808">Transferase</keyword>
<proteinExistence type="inferred from homology"/>
<sequence length="249" mass="26412">MSRVLRLGVNIDHVATIRNARGGDHPDPLRAAKIAAEAGADGITAHLREDRRHIGDRDIARLRDEIDLPLNLEMAATAEMLAIALRHRPHAACIVPEKREERTTEGGLDVVGGAVHLAPIITALGEAGVRVSLFIEPDLRQLDAARALGAPVVELHTGAYCDAAAGPAREAQFLRIDKAARHAQALGLECHAGHGLTYDTVEPVAALPAIAELNIGHFLIGEAIFVGLHQAIARMRAHMDAALRGGVAA</sequence>
<protein>
    <recommendedName>
        <fullName evidence="1">Pyridoxine 5'-phosphate synthase</fullName>
        <shortName evidence="1">PNP synthase</shortName>
        <ecNumber evidence="1">2.6.99.2</ecNumber>
    </recommendedName>
</protein>
<comment type="function">
    <text evidence="1">Catalyzes the complicated ring closure reaction between the two acyclic compounds 1-deoxy-D-xylulose-5-phosphate (DXP) and 3-amino-2-oxopropyl phosphate (1-amino-acetone-3-phosphate or AAP) to form pyridoxine 5'-phosphate (PNP) and inorganic phosphate.</text>
</comment>
<comment type="catalytic activity">
    <reaction evidence="1">
        <text>3-amino-2-oxopropyl phosphate + 1-deoxy-D-xylulose 5-phosphate = pyridoxine 5'-phosphate + phosphate + 2 H2O + H(+)</text>
        <dbReference type="Rhea" id="RHEA:15265"/>
        <dbReference type="ChEBI" id="CHEBI:15377"/>
        <dbReference type="ChEBI" id="CHEBI:15378"/>
        <dbReference type="ChEBI" id="CHEBI:43474"/>
        <dbReference type="ChEBI" id="CHEBI:57279"/>
        <dbReference type="ChEBI" id="CHEBI:57792"/>
        <dbReference type="ChEBI" id="CHEBI:58589"/>
        <dbReference type="EC" id="2.6.99.2"/>
    </reaction>
</comment>
<comment type="pathway">
    <text evidence="1">Cofactor biosynthesis; pyridoxine 5'-phosphate biosynthesis; pyridoxine 5'-phosphate from D-erythrose 4-phosphate: step 5/5.</text>
</comment>
<comment type="subunit">
    <text evidence="1">Homooctamer; tetramer of dimers.</text>
</comment>
<comment type="subcellular location">
    <subcellularLocation>
        <location evidence="1">Cytoplasm</location>
    </subcellularLocation>
</comment>
<comment type="similarity">
    <text evidence="1">Belongs to the PNP synthase family.</text>
</comment>
<evidence type="ECO:0000255" key="1">
    <source>
        <dbReference type="HAMAP-Rule" id="MF_00279"/>
    </source>
</evidence>
<dbReference type="EC" id="2.6.99.2" evidence="1"/>
<dbReference type="EMBL" id="CP000230">
    <property type="protein sequence ID" value="ABC22654.1"/>
    <property type="molecule type" value="Genomic_DNA"/>
</dbReference>
<dbReference type="RefSeq" id="WP_011389607.1">
    <property type="nucleotide sequence ID" value="NC_007643.1"/>
</dbReference>
<dbReference type="RefSeq" id="YP_426941.1">
    <property type="nucleotide sequence ID" value="NC_007643.1"/>
</dbReference>
<dbReference type="SMR" id="Q2RT91"/>
<dbReference type="STRING" id="269796.Rru_A1854"/>
<dbReference type="EnsemblBacteria" id="ABC22654">
    <property type="protein sequence ID" value="ABC22654"/>
    <property type="gene ID" value="Rru_A1854"/>
</dbReference>
<dbReference type="KEGG" id="rru:Rru_A1854"/>
<dbReference type="PATRIC" id="fig|269796.9.peg.1933"/>
<dbReference type="eggNOG" id="COG0854">
    <property type="taxonomic scope" value="Bacteria"/>
</dbReference>
<dbReference type="HOGENOM" id="CLU_074563_0_0_5"/>
<dbReference type="PhylomeDB" id="Q2RT91"/>
<dbReference type="UniPathway" id="UPA00244">
    <property type="reaction ID" value="UER00313"/>
</dbReference>
<dbReference type="Proteomes" id="UP000001929">
    <property type="component" value="Chromosome"/>
</dbReference>
<dbReference type="GO" id="GO:0005829">
    <property type="term" value="C:cytosol"/>
    <property type="evidence" value="ECO:0007669"/>
    <property type="project" value="TreeGrafter"/>
</dbReference>
<dbReference type="GO" id="GO:0033856">
    <property type="term" value="F:pyridoxine 5'-phosphate synthase activity"/>
    <property type="evidence" value="ECO:0007669"/>
    <property type="project" value="UniProtKB-EC"/>
</dbReference>
<dbReference type="GO" id="GO:0008615">
    <property type="term" value="P:pyridoxine biosynthetic process"/>
    <property type="evidence" value="ECO:0007669"/>
    <property type="project" value="UniProtKB-UniRule"/>
</dbReference>
<dbReference type="CDD" id="cd00003">
    <property type="entry name" value="PNPsynthase"/>
    <property type="match status" value="1"/>
</dbReference>
<dbReference type="Gene3D" id="3.20.20.70">
    <property type="entry name" value="Aldolase class I"/>
    <property type="match status" value="1"/>
</dbReference>
<dbReference type="HAMAP" id="MF_00279">
    <property type="entry name" value="PdxJ"/>
    <property type="match status" value="1"/>
</dbReference>
<dbReference type="InterPro" id="IPR013785">
    <property type="entry name" value="Aldolase_TIM"/>
</dbReference>
<dbReference type="InterPro" id="IPR004569">
    <property type="entry name" value="PyrdxlP_synth_PdxJ"/>
</dbReference>
<dbReference type="InterPro" id="IPR036130">
    <property type="entry name" value="Pyridoxine-5'_phos_synth"/>
</dbReference>
<dbReference type="NCBIfam" id="TIGR00559">
    <property type="entry name" value="pdxJ"/>
    <property type="match status" value="1"/>
</dbReference>
<dbReference type="NCBIfam" id="NF003624">
    <property type="entry name" value="PRK05265.1-2"/>
    <property type="match status" value="1"/>
</dbReference>
<dbReference type="NCBIfam" id="NF003625">
    <property type="entry name" value="PRK05265.1-3"/>
    <property type="match status" value="1"/>
</dbReference>
<dbReference type="NCBIfam" id="NF003627">
    <property type="entry name" value="PRK05265.1-5"/>
    <property type="match status" value="1"/>
</dbReference>
<dbReference type="PANTHER" id="PTHR30456">
    <property type="entry name" value="PYRIDOXINE 5'-PHOSPHATE SYNTHASE"/>
    <property type="match status" value="1"/>
</dbReference>
<dbReference type="PANTHER" id="PTHR30456:SF0">
    <property type="entry name" value="PYRIDOXINE 5'-PHOSPHATE SYNTHASE"/>
    <property type="match status" value="1"/>
</dbReference>
<dbReference type="Pfam" id="PF03740">
    <property type="entry name" value="PdxJ"/>
    <property type="match status" value="1"/>
</dbReference>
<dbReference type="SUPFAM" id="SSF63892">
    <property type="entry name" value="Pyridoxine 5'-phosphate synthase"/>
    <property type="match status" value="1"/>
</dbReference>
<reference key="1">
    <citation type="journal article" date="2011" name="Stand. Genomic Sci.">
        <title>Complete genome sequence of Rhodospirillum rubrum type strain (S1).</title>
        <authorList>
            <person name="Munk A.C."/>
            <person name="Copeland A."/>
            <person name="Lucas S."/>
            <person name="Lapidus A."/>
            <person name="Del Rio T.G."/>
            <person name="Barry K."/>
            <person name="Detter J.C."/>
            <person name="Hammon N."/>
            <person name="Israni S."/>
            <person name="Pitluck S."/>
            <person name="Brettin T."/>
            <person name="Bruce D."/>
            <person name="Han C."/>
            <person name="Tapia R."/>
            <person name="Gilna P."/>
            <person name="Schmutz J."/>
            <person name="Larimer F."/>
            <person name="Land M."/>
            <person name="Kyrpides N.C."/>
            <person name="Mavromatis K."/>
            <person name="Richardson P."/>
            <person name="Rohde M."/>
            <person name="Goeker M."/>
            <person name="Klenk H.P."/>
            <person name="Zhang Y."/>
            <person name="Roberts G.P."/>
            <person name="Reslewic S."/>
            <person name="Schwartz D.C."/>
        </authorList>
    </citation>
    <scope>NUCLEOTIDE SEQUENCE [LARGE SCALE GENOMIC DNA]</scope>
    <source>
        <strain>ATCC 11170 / ATH 1.1.1 / DSM 467 / LMG 4362 / NCIMB 8255 / S1</strain>
    </source>
</reference>
<accession>Q2RT91</accession>
<organism>
    <name type="scientific">Rhodospirillum rubrum (strain ATCC 11170 / ATH 1.1.1 / DSM 467 / LMG 4362 / NCIMB 8255 / S1)</name>
    <dbReference type="NCBI Taxonomy" id="269796"/>
    <lineage>
        <taxon>Bacteria</taxon>
        <taxon>Pseudomonadati</taxon>
        <taxon>Pseudomonadota</taxon>
        <taxon>Alphaproteobacteria</taxon>
        <taxon>Rhodospirillales</taxon>
        <taxon>Rhodospirillaceae</taxon>
        <taxon>Rhodospirillum</taxon>
    </lineage>
</organism>